<feature type="chain" id="PRO_0000059010" description="Putative HPr kinase/phosphorylase">
    <location>
        <begin position="1"/>
        <end position="615"/>
    </location>
</feature>
<feature type="binding site" evidence="2">
    <location>
        <begin position="480"/>
        <end position="487"/>
    </location>
    <ligand>
        <name>ATP</name>
        <dbReference type="ChEBI" id="CHEBI:30616"/>
    </ligand>
</feature>
<evidence type="ECO:0000250" key="1"/>
<evidence type="ECO:0000255" key="2"/>
<evidence type="ECO:0000305" key="3"/>
<keyword id="KW-0067">ATP-binding</keyword>
<keyword id="KW-0418">Kinase</keyword>
<keyword id="KW-0511">Multifunctional enzyme</keyword>
<keyword id="KW-0547">Nucleotide-binding</keyword>
<keyword id="KW-1185">Reference proteome</keyword>
<keyword id="KW-0677">Repeat</keyword>
<keyword id="KW-0723">Serine/threonine-protein kinase</keyword>
<keyword id="KW-0808">Transferase</keyword>
<protein>
    <recommendedName>
        <fullName>Putative HPr kinase/phosphorylase</fullName>
        <shortName>HPrK/P</shortName>
        <ecNumber>2.7.11.-</ecNumber>
        <ecNumber>2.7.4.-</ecNumber>
    </recommendedName>
</protein>
<comment type="function">
    <text evidence="1">Catalyzes the ATP- as well as the pyrophosphate-dependent phosphorylation of a specific serine residue in HPr, a phosphocarrier protein of the phosphoenolpyruvate-dependent sugar phosphotransferase system (PTS). HprK/P also catalyzes the pyrophosphate-producing, inorganic phosphate-dependent dephosphorylation (phosphorolysis) of seryl-phosphorylated HPr (P-Ser-HPr) (By similarity).</text>
</comment>
<comment type="catalytic activity">
    <reaction>
        <text>[HPr protein]-L-serine + ATP = [HPr protein]-O-phospho-L-serine + ADP + H(+)</text>
        <dbReference type="Rhea" id="RHEA:46600"/>
        <dbReference type="Rhea" id="RHEA-COMP:11602"/>
        <dbReference type="Rhea" id="RHEA-COMP:11603"/>
        <dbReference type="ChEBI" id="CHEBI:15378"/>
        <dbReference type="ChEBI" id="CHEBI:29999"/>
        <dbReference type="ChEBI" id="CHEBI:30616"/>
        <dbReference type="ChEBI" id="CHEBI:83421"/>
        <dbReference type="ChEBI" id="CHEBI:456216"/>
    </reaction>
</comment>
<comment type="catalytic activity">
    <reaction>
        <text>[HPr protein]-O-phospho-L-serine + phosphate + H(+) = [HPr protein]-L-serine + diphosphate</text>
        <dbReference type="Rhea" id="RHEA:46604"/>
        <dbReference type="Rhea" id="RHEA-COMP:11602"/>
        <dbReference type="Rhea" id="RHEA-COMP:11603"/>
        <dbReference type="ChEBI" id="CHEBI:15378"/>
        <dbReference type="ChEBI" id="CHEBI:29999"/>
        <dbReference type="ChEBI" id="CHEBI:33019"/>
        <dbReference type="ChEBI" id="CHEBI:43474"/>
        <dbReference type="ChEBI" id="CHEBI:83421"/>
    </reaction>
</comment>
<comment type="miscellaneous">
    <text>This protein is composed of two complete HPrK/P domains fused in tandem. This unusual organization may lead to a separation of the two antagonistic activities in F.nucleatum, with the C-terminal copy carrying the kinase and the N-terminal copy carrying the phosphorylase.</text>
</comment>
<comment type="similarity">
    <text evidence="3">Belongs to the HPrK/P family.</text>
</comment>
<gene>
    <name type="primary">hprK</name>
    <name type="ordered locus">FN1012</name>
</gene>
<dbReference type="EC" id="2.7.11.-"/>
<dbReference type="EC" id="2.7.4.-"/>
<dbReference type="EMBL" id="AE009951">
    <property type="protein sequence ID" value="AAL95208.1"/>
    <property type="molecule type" value="Genomic_DNA"/>
</dbReference>
<dbReference type="RefSeq" id="NP_603909.3">
    <property type="nucleotide sequence ID" value="NC_003454.1"/>
</dbReference>
<dbReference type="RefSeq" id="WP_005901728.1">
    <property type="nucleotide sequence ID" value="NZ_OZ209243.1"/>
</dbReference>
<dbReference type="SMR" id="Q8R5N8"/>
<dbReference type="STRING" id="190304.FN1012"/>
<dbReference type="PaxDb" id="190304-FN1012"/>
<dbReference type="EnsemblBacteria" id="AAL95208">
    <property type="protein sequence ID" value="AAL95208"/>
    <property type="gene ID" value="FN1012"/>
</dbReference>
<dbReference type="GeneID" id="79783996"/>
<dbReference type="KEGG" id="fnu:FN1012"/>
<dbReference type="PATRIC" id="fig|190304.8.peg.1577"/>
<dbReference type="eggNOG" id="COG1493">
    <property type="taxonomic scope" value="Bacteria"/>
</dbReference>
<dbReference type="HOGENOM" id="CLU_031537_0_0_0"/>
<dbReference type="InParanoid" id="Q8R5N8"/>
<dbReference type="BioCyc" id="FNUC190304:G1FZS-1594-MONOMER"/>
<dbReference type="Proteomes" id="UP000002521">
    <property type="component" value="Chromosome"/>
</dbReference>
<dbReference type="GO" id="GO:0005829">
    <property type="term" value="C:cytosol"/>
    <property type="evidence" value="ECO:0000318"/>
    <property type="project" value="GO_Central"/>
</dbReference>
<dbReference type="GO" id="GO:0005524">
    <property type="term" value="F:ATP binding"/>
    <property type="evidence" value="ECO:0007669"/>
    <property type="project" value="UniProtKB-KW"/>
</dbReference>
<dbReference type="GO" id="GO:0000155">
    <property type="term" value="F:phosphorelay sensor kinase activity"/>
    <property type="evidence" value="ECO:0007669"/>
    <property type="project" value="InterPro"/>
</dbReference>
<dbReference type="GO" id="GO:0004674">
    <property type="term" value="F:protein serine/threonine kinase activity"/>
    <property type="evidence" value="ECO:0007669"/>
    <property type="project" value="UniProtKB-KW"/>
</dbReference>
<dbReference type="GO" id="GO:0006109">
    <property type="term" value="P:regulation of carbohydrate metabolic process"/>
    <property type="evidence" value="ECO:0007669"/>
    <property type="project" value="InterPro"/>
</dbReference>
<dbReference type="CDD" id="cd01918">
    <property type="entry name" value="HprK_C"/>
    <property type="match status" value="2"/>
</dbReference>
<dbReference type="FunFam" id="3.40.50.300:FF:004071">
    <property type="entry name" value="HPr kinase/phosphorylase"/>
    <property type="match status" value="1"/>
</dbReference>
<dbReference type="Gene3D" id="3.40.1390.20">
    <property type="entry name" value="HprK N-terminal domain-like"/>
    <property type="match status" value="2"/>
</dbReference>
<dbReference type="Gene3D" id="3.40.50.300">
    <property type="entry name" value="P-loop containing nucleotide triphosphate hydrolases"/>
    <property type="match status" value="2"/>
</dbReference>
<dbReference type="InterPro" id="IPR003755">
    <property type="entry name" value="HPr(Ser)_kin/Pase"/>
</dbReference>
<dbReference type="InterPro" id="IPR011104">
    <property type="entry name" value="Hpr_kin/Pase_C"/>
</dbReference>
<dbReference type="InterPro" id="IPR011126">
    <property type="entry name" value="Hpr_kin/Pase_Hpr_N"/>
</dbReference>
<dbReference type="InterPro" id="IPR027417">
    <property type="entry name" value="P-loop_NTPase"/>
</dbReference>
<dbReference type="InterPro" id="IPR028979">
    <property type="entry name" value="Ser_kin/Pase_Hpr-like_N_sf"/>
</dbReference>
<dbReference type="NCBIfam" id="TIGR00679">
    <property type="entry name" value="hpr-ser"/>
    <property type="match status" value="1"/>
</dbReference>
<dbReference type="PANTHER" id="PTHR30305:SF1">
    <property type="entry name" value="HPR KINASE_PHOSPHORYLASE"/>
    <property type="match status" value="1"/>
</dbReference>
<dbReference type="PANTHER" id="PTHR30305">
    <property type="entry name" value="PROTEIN YJDM-RELATED"/>
    <property type="match status" value="1"/>
</dbReference>
<dbReference type="Pfam" id="PF07475">
    <property type="entry name" value="Hpr_kinase_C"/>
    <property type="match status" value="2"/>
</dbReference>
<dbReference type="Pfam" id="PF02603">
    <property type="entry name" value="Hpr_kinase_N"/>
    <property type="match status" value="2"/>
</dbReference>
<dbReference type="SUPFAM" id="SSF75138">
    <property type="entry name" value="HprK N-terminal domain-like"/>
    <property type="match status" value="2"/>
</dbReference>
<dbReference type="SUPFAM" id="SSF53795">
    <property type="entry name" value="PEP carboxykinase-like"/>
    <property type="match status" value="2"/>
</dbReference>
<name>HPRK_FUSNN</name>
<organism>
    <name type="scientific">Fusobacterium nucleatum subsp. nucleatum (strain ATCC 25586 / DSM 15643 / BCRC 10681 / CIP 101130 / JCM 8532 / KCTC 2640 / LMG 13131 / VPI 4355)</name>
    <dbReference type="NCBI Taxonomy" id="190304"/>
    <lineage>
        <taxon>Bacteria</taxon>
        <taxon>Fusobacteriati</taxon>
        <taxon>Fusobacteriota</taxon>
        <taxon>Fusobacteriia</taxon>
        <taxon>Fusobacteriales</taxon>
        <taxon>Fusobacteriaceae</taxon>
        <taxon>Fusobacterium</taxon>
    </lineage>
</organism>
<sequence>MYTYTTIREIVDKLNLEILNEGNLDLKIDIPNIYQIGYELVGFLDKESDELNKYINICSLKESRFIATFSKERKEKVISEYMSLDFPALIFTKDAIITEEFYYYAKRYNKNILLSNEKASVTVRKIKFFLSKALSIEEEYENYSLMEIHGVGVLMSGYSNARKGVMIELIERGHRMVTDKNLIIRRVGENDLVGYNAKKREKLGHFYLEDIKGGYVDVTDHFGVKSTRIEKKINILIVLEEWNEKEFYDRLGLDVQYEDFVGEKIQKYIIPVRKGRNLAVIIETAALTFRLRRMGHNTPLEFLTKSQEIIERKKKEREEYMNTNRLPVTKLINEFDLEIKYGEDKVSSTYINSSNVYRPSLSLIGFFDLIEEVKNIGIQIFSKIEFKFLENLPPIERVNNLKKFLTYDIPMIVLTVDANPPDYFFDLVSKSGHILAIAPYKKASQIVANFNNYLDSFFSETTSVHGVLVELFGFGVLLTGKSGIGKSETALELIHRGHRLIADDMVKFYRNTQGDVVGKSAELPFFMEIRGLGIIDIKTLYGLSAVRLSKTLDMIIELQAVDNSDYMSAPSAHLYEDVLGKPIKKRILEISSGRNAAAMVEVMVMDHMSGLLGEK</sequence>
<proteinExistence type="inferred from homology"/>
<reference key="1">
    <citation type="journal article" date="2002" name="J. Bacteriol.">
        <title>Genome sequence and analysis of the oral bacterium Fusobacterium nucleatum strain ATCC 25586.</title>
        <authorList>
            <person name="Kapatral V."/>
            <person name="Anderson I."/>
            <person name="Ivanova N."/>
            <person name="Reznik G."/>
            <person name="Los T."/>
            <person name="Lykidis A."/>
            <person name="Bhattacharyya A."/>
            <person name="Bartman A."/>
            <person name="Gardner W."/>
            <person name="Grechkin G."/>
            <person name="Zhu L."/>
            <person name="Vasieva O."/>
            <person name="Chu L."/>
            <person name="Kogan Y."/>
            <person name="Chaga O."/>
            <person name="Goltsman E."/>
            <person name="Bernal A."/>
            <person name="Larsen N."/>
            <person name="D'Souza M."/>
            <person name="Walunas T."/>
            <person name="Pusch G."/>
            <person name="Haselkorn R."/>
            <person name="Fonstein M."/>
            <person name="Kyrpides N.C."/>
            <person name="Overbeek R."/>
        </authorList>
    </citation>
    <scope>NUCLEOTIDE SEQUENCE [LARGE SCALE GENOMIC DNA]</scope>
    <source>
        <strain>ATCC 25586 / DSM 15643 / BCRC 10681 / CIP 101130 / JCM 8532 / KCTC 2640 / LMG 13131 / VPI 4355</strain>
    </source>
</reference>
<accession>Q8R5N8</accession>